<evidence type="ECO:0000250" key="1">
    <source>
        <dbReference type="UniProtKB" id="Q6P5H6"/>
    </source>
</evidence>
<evidence type="ECO:0000255" key="2"/>
<evidence type="ECO:0000255" key="3">
    <source>
        <dbReference type="PROSITE-ProRule" id="PRU00084"/>
    </source>
</evidence>
<evidence type="ECO:0000256" key="4">
    <source>
        <dbReference type="SAM" id="MobiDB-lite"/>
    </source>
</evidence>
<evidence type="ECO:0000269" key="5">
    <source>
    </source>
</evidence>
<evidence type="ECO:0000269" key="6">
    <source>
    </source>
</evidence>
<evidence type="ECO:0000269" key="7">
    <source>
    </source>
</evidence>
<evidence type="ECO:0000303" key="8">
    <source>
    </source>
</evidence>
<evidence type="ECO:0000305" key="9"/>
<comment type="function">
    <text>May be involved in regulation of cell migration (PubMed:22846708, PubMed:25448675). May regulate cell-matrix interactions via its interaction with ITGB5 and modifying ITGB5 cytoplasmic tail interactions such as with FERMT2 and TLN1. May regulate ROCK1 kinase activity possibly involved in regulation of actin stress fiber formation (PubMed:25448675).</text>
</comment>
<comment type="subunit">
    <text evidence="5 6">Interacts with CTNND1 (PubMed:22846708). Interacts with ITGB5 (via cytoplasmic domain) and ROCK1 (PubMed:25448675).</text>
</comment>
<comment type="interaction">
    <interactant intactId="EBI-727282">
        <id>Q7Z6J6</id>
    </interactant>
    <interactant intactId="EBI-701927">
        <id>O60716</id>
        <label>CTNND1</label>
    </interactant>
    <organismsDiffer>false</organismsDiffer>
    <experiments>3</experiments>
</comment>
<comment type="interaction">
    <interactant intactId="EBI-727282">
        <id>Q7Z6J6</id>
    </interactant>
    <interactant intactId="EBI-1223434">
        <id>P18084</id>
        <label>ITGB5</label>
    </interactant>
    <organismsDiffer>false</organismsDiffer>
    <experiments>3</experiments>
</comment>
<comment type="interaction">
    <interactant intactId="EBI-727282">
        <id>Q7Z6J6</id>
    </interactant>
    <interactant intactId="EBI-876651">
        <id>Q13464</id>
        <label>ROCK1</label>
    </interactant>
    <organismsDiffer>false</organismsDiffer>
    <experiments>4</experiments>
</comment>
<comment type="subcellular location">
    <subcellularLocation>
        <location evidence="9">Membrane</location>
        <topology evidence="9">Single-pass membrane protein</topology>
    </subcellularLocation>
    <subcellularLocation>
        <location evidence="5">Cell junction</location>
        <location evidence="5">Adherens junction</location>
    </subcellularLocation>
</comment>
<comment type="alternative products">
    <event type="alternative splicing"/>
    <isoform>
        <id>Q7Z6J6-1</id>
        <name>1</name>
        <sequence type="displayed"/>
    </isoform>
    <isoform>
        <id>Q7Z6J6-2</id>
        <name>2</name>
        <sequence type="described" ref="VSP_019982"/>
    </isoform>
</comment>
<comment type="disease" evidence="7">
    <disease id="DI-06525">
        <name>Neurodevelopmental disorder with eye movement abnormalities and ataxia</name>
        <acronym>NEDEMA</acronym>
        <description>An autosomal dominant disorder apparent from infancy and characterized by global developmental delay, intellectual disability, speech difficulties, ataxia, seizures, and abnormalities of eye movement.</description>
        <dbReference type="MIM" id="620094"/>
    </disease>
    <text>The disease is caused by variants affecting the gene represented in this entry.</text>
</comment>
<name>FRMD5_HUMAN</name>
<organism>
    <name type="scientific">Homo sapiens</name>
    <name type="common">Human</name>
    <dbReference type="NCBI Taxonomy" id="9606"/>
    <lineage>
        <taxon>Eukaryota</taxon>
        <taxon>Metazoa</taxon>
        <taxon>Chordata</taxon>
        <taxon>Craniata</taxon>
        <taxon>Vertebrata</taxon>
        <taxon>Euteleostomi</taxon>
        <taxon>Mammalia</taxon>
        <taxon>Eutheria</taxon>
        <taxon>Euarchontoglires</taxon>
        <taxon>Primates</taxon>
        <taxon>Haplorrhini</taxon>
        <taxon>Catarrhini</taxon>
        <taxon>Hominidae</taxon>
        <taxon>Homo</taxon>
    </lineage>
</organism>
<accession>Q7Z6J6</accession>
<accession>Q8NBG4</accession>
<protein>
    <recommendedName>
        <fullName>FERM domain-containing protein 5</fullName>
    </recommendedName>
</protein>
<gene>
    <name type="primary">FRMD5</name>
</gene>
<proteinExistence type="evidence at protein level"/>
<sequence>MLSRLMSGSSRSLEREYSCTVRLLDDSEYTCTIQRDAKGQYLFDLLCHHLNLLEKDYFGIRFVDPDKQRHWLEFTKSVVKQLRSQPPFTMCFRVKFYPADPAALKEEITRYLVFLQIKRDLYHGRLLCKTSDAALLAAYILQAEIGDYDSGKHPEGYSSKFQFFPKHSEKLERKIAEIHKTELSGQTPATSELNFLRKAQTLETYGVDPHPCKDVSGNAAFLAFTPFGFVVLQGNKRVHFIKWNEVTKLKFEGKTFYLYVSQKEEKKIILTYFAPTPEACKHLWKCGIENQAFYKLEKSSQVRTVSSSNLFFKGSRFRYSGRVAKEVMESSAKIKREPPEIHRAGMVPSRSCPSITHGPRLSSVPRTRRRAVHISIMEGLESLRDSAHSTPVRSTSHGDTFLPHVRSSRTDSNERVAVIADEAYSPADSVLPTPVAEHSLELMLLSRQINGATCSIEEEKESEASTPTATEVEALGGELRALCQGHSGPEEEQVNKFVLSVLRLLLVTMGLLFVLLLLLIILTESDLDIAFFRDIRQTPEFEQFHYQYFCPLRRWFACKIRSVVSLLIDT</sequence>
<keyword id="KW-0025">Alternative splicing</keyword>
<keyword id="KW-0965">Cell junction</keyword>
<keyword id="KW-0225">Disease variant</keyword>
<keyword id="KW-0991">Intellectual disability</keyword>
<keyword id="KW-0472">Membrane</keyword>
<keyword id="KW-0597">Phosphoprotein</keyword>
<keyword id="KW-1267">Proteomics identification</keyword>
<keyword id="KW-1185">Reference proteome</keyword>
<keyword id="KW-0812">Transmembrane</keyword>
<keyword id="KW-1133">Transmembrane helix</keyword>
<feature type="chain" id="PRO_0000247446" description="FERM domain-containing protein 5">
    <location>
        <begin position="1"/>
        <end position="570"/>
    </location>
</feature>
<feature type="transmembrane region" description="Helical" evidence="2">
    <location>
        <begin position="504"/>
        <end position="524"/>
    </location>
</feature>
<feature type="domain" description="FERM" evidence="3">
    <location>
        <begin position="17"/>
        <end position="298"/>
    </location>
</feature>
<feature type="region of interest" description="Interaction with ROCK1" evidence="6">
    <location>
        <begin position="308"/>
        <end position="353"/>
    </location>
</feature>
<feature type="region of interest" description="Disordered" evidence="4">
    <location>
        <begin position="344"/>
        <end position="367"/>
    </location>
</feature>
<feature type="region of interest" description="Disordered" evidence="4">
    <location>
        <begin position="385"/>
        <end position="407"/>
    </location>
</feature>
<feature type="compositionally biased region" description="Polar residues" evidence="4">
    <location>
        <begin position="388"/>
        <end position="398"/>
    </location>
</feature>
<feature type="modified residue" description="Phosphoserine" evidence="1">
    <location>
        <position position="375"/>
    </location>
</feature>
<feature type="splice variant" id="VSP_019982" description="In isoform 2." evidence="8">
    <location>
        <begin position="81"/>
        <end position="95"/>
    </location>
</feature>
<feature type="sequence variant" id="VAR_087746" description="In NEDEMA; uncertain significance." evidence="7">
    <original>F</original>
    <variation>L</variation>
    <location>
        <position position="114"/>
    </location>
</feature>
<feature type="sequence variant" id="VAR_087747" description="In NEDEMA; uncertain significance; dbSNP:rs2140355061." evidence="7">
    <original>S</original>
    <variation>R</variation>
    <location>
        <position position="349"/>
    </location>
</feature>
<feature type="sequence variant" id="VAR_087748" description="In NEDEMA." evidence="7">
    <original>S</original>
    <variation>G</variation>
    <location>
        <position position="351"/>
    </location>
</feature>
<feature type="sequence variant" id="VAR_087749" description="In NEDEMA; dbSNP:rs2140355031." evidence="7">
    <original>S</original>
    <variation>R</variation>
    <location>
        <position position="351"/>
    </location>
</feature>
<feature type="sequence variant" id="VAR_087750" description="In NEDEMA; dbSNP:rs2140355019." evidence="7">
    <original>C</original>
    <variation>R</variation>
    <location>
        <position position="352"/>
    </location>
</feature>
<feature type="sequence variant" id="VAR_087751" description="In NEDEMA; uncertain significance." evidence="7">
    <original>S</original>
    <variation>P</variation>
    <location>
        <position position="354"/>
    </location>
</feature>
<feature type="sequence variant" id="VAR_087752" description="In NEDEMA; uncertain significance; dbSNP:rs1006096376." evidence="7">
    <original>Y</original>
    <variation>C</variation>
    <location>
        <position position="546"/>
    </location>
</feature>
<dbReference type="EMBL" id="AK090572">
    <property type="protein sequence ID" value="BAC03480.1"/>
    <property type="molecule type" value="mRNA"/>
</dbReference>
<dbReference type="EMBL" id="BC053647">
    <property type="protein sequence ID" value="AAH53647.1"/>
    <property type="molecule type" value="mRNA"/>
</dbReference>
<dbReference type="CCDS" id="CCDS10107.2">
    <molecule id="Q7Z6J6-1"/>
</dbReference>
<dbReference type="RefSeq" id="NP_116281.2">
    <molecule id="Q7Z6J6-1"/>
    <property type="nucleotide sequence ID" value="NM_032892.5"/>
</dbReference>
<dbReference type="SMR" id="Q7Z6J6"/>
<dbReference type="BioGRID" id="124407">
    <property type="interactions" value="91"/>
</dbReference>
<dbReference type="FunCoup" id="Q7Z6J6">
    <property type="interactions" value="374"/>
</dbReference>
<dbReference type="IntAct" id="Q7Z6J6">
    <property type="interactions" value="68"/>
</dbReference>
<dbReference type="MINT" id="Q7Z6J6"/>
<dbReference type="STRING" id="9606.ENSP00000403067"/>
<dbReference type="GlyGen" id="Q7Z6J6">
    <property type="glycosylation" value="2 sites"/>
</dbReference>
<dbReference type="iPTMnet" id="Q7Z6J6"/>
<dbReference type="PhosphoSitePlus" id="Q7Z6J6"/>
<dbReference type="BioMuta" id="FRMD5"/>
<dbReference type="DMDM" id="74738821"/>
<dbReference type="jPOST" id="Q7Z6J6"/>
<dbReference type="MassIVE" id="Q7Z6J6"/>
<dbReference type="PaxDb" id="9606-ENSP00000403067"/>
<dbReference type="PeptideAtlas" id="Q7Z6J6"/>
<dbReference type="ProteomicsDB" id="69426">
    <molecule id="Q7Z6J6-1"/>
</dbReference>
<dbReference type="ProteomicsDB" id="69427">
    <molecule id="Q7Z6J6-2"/>
</dbReference>
<dbReference type="Pumba" id="Q7Z6J6"/>
<dbReference type="Antibodypedia" id="2633">
    <property type="antibodies" value="89 antibodies from 16 providers"/>
</dbReference>
<dbReference type="DNASU" id="84978"/>
<dbReference type="Ensembl" id="ENST00000417257.6">
    <molecule id="Q7Z6J6-1"/>
    <property type="protein sequence ID" value="ENSP00000403067.1"/>
    <property type="gene ID" value="ENSG00000171877.21"/>
</dbReference>
<dbReference type="GeneID" id="84978"/>
<dbReference type="KEGG" id="hsa:84978"/>
<dbReference type="MANE-Select" id="ENST00000417257.6">
    <property type="protein sequence ID" value="ENSP00000403067.1"/>
    <property type="RefSeq nucleotide sequence ID" value="NM_032892.5"/>
    <property type="RefSeq protein sequence ID" value="NP_116281.2"/>
</dbReference>
<dbReference type="UCSC" id="uc001ztl.5">
    <molecule id="Q7Z6J6-1"/>
    <property type="organism name" value="human"/>
</dbReference>
<dbReference type="AGR" id="HGNC:28214"/>
<dbReference type="CTD" id="84978"/>
<dbReference type="DisGeNET" id="84978"/>
<dbReference type="GeneCards" id="FRMD5"/>
<dbReference type="HGNC" id="HGNC:28214">
    <property type="gene designation" value="FRMD5"/>
</dbReference>
<dbReference type="HPA" id="ENSG00000171877">
    <property type="expression patterns" value="Tissue enhanced (brain, heart muscle, retina)"/>
</dbReference>
<dbReference type="MalaCards" id="FRMD5"/>
<dbReference type="MIM" id="616309">
    <property type="type" value="gene"/>
</dbReference>
<dbReference type="MIM" id="620094">
    <property type="type" value="phenotype"/>
</dbReference>
<dbReference type="neXtProt" id="NX_Q7Z6J6"/>
<dbReference type="OpenTargets" id="ENSG00000171877"/>
<dbReference type="PharmGKB" id="PA142671751"/>
<dbReference type="VEuPathDB" id="HostDB:ENSG00000171877"/>
<dbReference type="eggNOG" id="KOG3530">
    <property type="taxonomic scope" value="Eukaryota"/>
</dbReference>
<dbReference type="GeneTree" id="ENSGT00940000156346"/>
<dbReference type="HOGENOM" id="CLU_003623_1_7_1"/>
<dbReference type="InParanoid" id="Q7Z6J6"/>
<dbReference type="OMA" id="HFLQWNE"/>
<dbReference type="OrthoDB" id="6266673at2759"/>
<dbReference type="PAN-GO" id="Q7Z6J6">
    <property type="GO annotations" value="2 GO annotations based on evolutionary models"/>
</dbReference>
<dbReference type="PhylomeDB" id="Q7Z6J6"/>
<dbReference type="TreeFam" id="TF343477"/>
<dbReference type="PathwayCommons" id="Q7Z6J6"/>
<dbReference type="SignaLink" id="Q7Z6J6"/>
<dbReference type="BioGRID-ORCS" id="84978">
    <property type="hits" value="15 hits in 1147 CRISPR screens"/>
</dbReference>
<dbReference type="ChiTaRS" id="FRMD5">
    <property type="organism name" value="human"/>
</dbReference>
<dbReference type="GenomeRNAi" id="84978"/>
<dbReference type="Pharos" id="Q7Z6J6">
    <property type="development level" value="Tbio"/>
</dbReference>
<dbReference type="PRO" id="PR:Q7Z6J6"/>
<dbReference type="Proteomes" id="UP000005640">
    <property type="component" value="Chromosome 15"/>
</dbReference>
<dbReference type="RNAct" id="Q7Z6J6">
    <property type="molecule type" value="protein"/>
</dbReference>
<dbReference type="Bgee" id="ENSG00000171877">
    <property type="expression patterns" value="Expressed in cardiac muscle of right atrium and 140 other cell types or tissues"/>
</dbReference>
<dbReference type="ExpressionAtlas" id="Q7Z6J6">
    <property type="expression patterns" value="baseline and differential"/>
</dbReference>
<dbReference type="GO" id="GO:0005912">
    <property type="term" value="C:adherens junction"/>
    <property type="evidence" value="ECO:0000314"/>
    <property type="project" value="UniProtKB"/>
</dbReference>
<dbReference type="GO" id="GO:0005856">
    <property type="term" value="C:cytoskeleton"/>
    <property type="evidence" value="ECO:0000318"/>
    <property type="project" value="GO_Central"/>
</dbReference>
<dbReference type="GO" id="GO:0016020">
    <property type="term" value="C:membrane"/>
    <property type="evidence" value="ECO:0007669"/>
    <property type="project" value="UniProtKB-SubCell"/>
</dbReference>
<dbReference type="GO" id="GO:0008092">
    <property type="term" value="F:cytoskeletal protein binding"/>
    <property type="evidence" value="ECO:0007669"/>
    <property type="project" value="InterPro"/>
</dbReference>
<dbReference type="GO" id="GO:0005178">
    <property type="term" value="F:integrin binding"/>
    <property type="evidence" value="ECO:0000314"/>
    <property type="project" value="UniProtKB"/>
</dbReference>
<dbReference type="GO" id="GO:0019901">
    <property type="term" value="F:protein kinase binding"/>
    <property type="evidence" value="ECO:0000314"/>
    <property type="project" value="UniProtKB"/>
</dbReference>
<dbReference type="GO" id="GO:0031032">
    <property type="term" value="P:actomyosin structure organization"/>
    <property type="evidence" value="ECO:0000318"/>
    <property type="project" value="GO_Central"/>
</dbReference>
<dbReference type="GO" id="GO:2000146">
    <property type="term" value="P:negative regulation of cell motility"/>
    <property type="evidence" value="ECO:0000315"/>
    <property type="project" value="UniProtKB"/>
</dbReference>
<dbReference type="GO" id="GO:0045785">
    <property type="term" value="P:positive regulation of cell adhesion"/>
    <property type="evidence" value="ECO:0000315"/>
    <property type="project" value="UniProtKB"/>
</dbReference>
<dbReference type="GO" id="GO:0030334">
    <property type="term" value="P:regulation of cell migration"/>
    <property type="evidence" value="ECO:0000315"/>
    <property type="project" value="UniProtKB"/>
</dbReference>
<dbReference type="CDD" id="cd14473">
    <property type="entry name" value="FERM_B-lobe"/>
    <property type="match status" value="1"/>
</dbReference>
<dbReference type="CDD" id="cd13192">
    <property type="entry name" value="FERM_C_FRMD3_FRMD5"/>
    <property type="match status" value="1"/>
</dbReference>
<dbReference type="CDD" id="cd17102">
    <property type="entry name" value="FERM_F1_FRMD3"/>
    <property type="match status" value="1"/>
</dbReference>
<dbReference type="FunFam" id="3.10.20.90:FF:000458">
    <property type="entry name" value="Erythrocyte membrane protein band 4.1a"/>
    <property type="match status" value="1"/>
</dbReference>
<dbReference type="FunFam" id="2.30.29.30:FF:000043">
    <property type="entry name" value="FERM domain-containing protein 5"/>
    <property type="match status" value="1"/>
</dbReference>
<dbReference type="FunFam" id="1.20.80.10:FF:000006">
    <property type="entry name" value="FERM domain-containing protein 5 isoform X1"/>
    <property type="match status" value="1"/>
</dbReference>
<dbReference type="Gene3D" id="1.20.80.10">
    <property type="match status" value="1"/>
</dbReference>
<dbReference type="Gene3D" id="3.10.20.90">
    <property type="entry name" value="Phosphatidylinositol 3-kinase Catalytic Subunit, Chain A, domain 1"/>
    <property type="match status" value="1"/>
</dbReference>
<dbReference type="Gene3D" id="2.30.29.30">
    <property type="entry name" value="Pleckstrin-homology domain (PH domain)/Phosphotyrosine-binding domain (PTB)"/>
    <property type="match status" value="1"/>
</dbReference>
<dbReference type="InterPro" id="IPR019749">
    <property type="entry name" value="Band_41_domain"/>
</dbReference>
<dbReference type="InterPro" id="IPR000798">
    <property type="entry name" value="Ez/rad/moesin-like"/>
</dbReference>
<dbReference type="InterPro" id="IPR014847">
    <property type="entry name" value="FA"/>
</dbReference>
<dbReference type="InterPro" id="IPR014352">
    <property type="entry name" value="FERM/acyl-CoA-bd_prot_sf"/>
</dbReference>
<dbReference type="InterPro" id="IPR035963">
    <property type="entry name" value="FERM_2"/>
</dbReference>
<dbReference type="InterPro" id="IPR019748">
    <property type="entry name" value="FERM_central"/>
</dbReference>
<dbReference type="InterPro" id="IPR019747">
    <property type="entry name" value="FERM_CS"/>
</dbReference>
<dbReference type="InterPro" id="IPR000299">
    <property type="entry name" value="FERM_domain"/>
</dbReference>
<dbReference type="InterPro" id="IPR018979">
    <property type="entry name" value="FERM_N"/>
</dbReference>
<dbReference type="InterPro" id="IPR018980">
    <property type="entry name" value="FERM_PH-like_C"/>
</dbReference>
<dbReference type="InterPro" id="IPR011993">
    <property type="entry name" value="PH-like_dom_sf"/>
</dbReference>
<dbReference type="InterPro" id="IPR029071">
    <property type="entry name" value="Ubiquitin-like_domsf"/>
</dbReference>
<dbReference type="PANTHER" id="PTHR23280">
    <property type="entry name" value="4.1 G PROTEIN"/>
    <property type="match status" value="1"/>
</dbReference>
<dbReference type="PANTHER" id="PTHR23280:SF5">
    <property type="entry name" value="FERM DOMAIN-CONTAINING PROTEIN 5"/>
    <property type="match status" value="1"/>
</dbReference>
<dbReference type="Pfam" id="PF08736">
    <property type="entry name" value="FA"/>
    <property type="match status" value="1"/>
</dbReference>
<dbReference type="Pfam" id="PF09380">
    <property type="entry name" value="FERM_C"/>
    <property type="match status" value="1"/>
</dbReference>
<dbReference type="Pfam" id="PF00373">
    <property type="entry name" value="FERM_M"/>
    <property type="match status" value="1"/>
</dbReference>
<dbReference type="Pfam" id="PF09379">
    <property type="entry name" value="FERM_N"/>
    <property type="match status" value="1"/>
</dbReference>
<dbReference type="PRINTS" id="PR00935">
    <property type="entry name" value="BAND41"/>
</dbReference>
<dbReference type="PRINTS" id="PR00661">
    <property type="entry name" value="ERMFAMILY"/>
</dbReference>
<dbReference type="SMART" id="SM00295">
    <property type="entry name" value="B41"/>
    <property type="match status" value="1"/>
</dbReference>
<dbReference type="SMART" id="SM01195">
    <property type="entry name" value="FA"/>
    <property type="match status" value="1"/>
</dbReference>
<dbReference type="SMART" id="SM01196">
    <property type="entry name" value="FERM_C"/>
    <property type="match status" value="1"/>
</dbReference>
<dbReference type="SUPFAM" id="SSF50729">
    <property type="entry name" value="PH domain-like"/>
    <property type="match status" value="1"/>
</dbReference>
<dbReference type="SUPFAM" id="SSF47031">
    <property type="entry name" value="Second domain of FERM"/>
    <property type="match status" value="1"/>
</dbReference>
<dbReference type="SUPFAM" id="SSF54236">
    <property type="entry name" value="Ubiquitin-like"/>
    <property type="match status" value="1"/>
</dbReference>
<dbReference type="PROSITE" id="PS00660">
    <property type="entry name" value="FERM_1"/>
    <property type="match status" value="1"/>
</dbReference>
<dbReference type="PROSITE" id="PS50057">
    <property type="entry name" value="FERM_3"/>
    <property type="match status" value="1"/>
</dbReference>
<reference key="1">
    <citation type="journal article" date="2004" name="Nat. Genet.">
        <title>Complete sequencing and characterization of 21,243 full-length human cDNAs.</title>
        <authorList>
            <person name="Ota T."/>
            <person name="Suzuki Y."/>
            <person name="Nishikawa T."/>
            <person name="Otsuki T."/>
            <person name="Sugiyama T."/>
            <person name="Irie R."/>
            <person name="Wakamatsu A."/>
            <person name="Hayashi K."/>
            <person name="Sato H."/>
            <person name="Nagai K."/>
            <person name="Kimura K."/>
            <person name="Makita H."/>
            <person name="Sekine M."/>
            <person name="Obayashi M."/>
            <person name="Nishi T."/>
            <person name="Shibahara T."/>
            <person name="Tanaka T."/>
            <person name="Ishii S."/>
            <person name="Yamamoto J."/>
            <person name="Saito K."/>
            <person name="Kawai Y."/>
            <person name="Isono Y."/>
            <person name="Nakamura Y."/>
            <person name="Nagahari K."/>
            <person name="Murakami K."/>
            <person name="Yasuda T."/>
            <person name="Iwayanagi T."/>
            <person name="Wagatsuma M."/>
            <person name="Shiratori A."/>
            <person name="Sudo H."/>
            <person name="Hosoiri T."/>
            <person name="Kaku Y."/>
            <person name="Kodaira H."/>
            <person name="Kondo H."/>
            <person name="Sugawara M."/>
            <person name="Takahashi M."/>
            <person name="Kanda K."/>
            <person name="Yokoi T."/>
            <person name="Furuya T."/>
            <person name="Kikkawa E."/>
            <person name="Omura Y."/>
            <person name="Abe K."/>
            <person name="Kamihara K."/>
            <person name="Katsuta N."/>
            <person name="Sato K."/>
            <person name="Tanikawa M."/>
            <person name="Yamazaki M."/>
            <person name="Ninomiya K."/>
            <person name="Ishibashi T."/>
            <person name="Yamashita H."/>
            <person name="Murakawa K."/>
            <person name="Fujimori K."/>
            <person name="Tanai H."/>
            <person name="Kimata M."/>
            <person name="Watanabe M."/>
            <person name="Hiraoka S."/>
            <person name="Chiba Y."/>
            <person name="Ishida S."/>
            <person name="Ono Y."/>
            <person name="Takiguchi S."/>
            <person name="Watanabe S."/>
            <person name="Yosida M."/>
            <person name="Hotuta T."/>
            <person name="Kusano J."/>
            <person name="Kanehori K."/>
            <person name="Takahashi-Fujii A."/>
            <person name="Hara H."/>
            <person name="Tanase T.-O."/>
            <person name="Nomura Y."/>
            <person name="Togiya S."/>
            <person name="Komai F."/>
            <person name="Hara R."/>
            <person name="Takeuchi K."/>
            <person name="Arita M."/>
            <person name="Imose N."/>
            <person name="Musashino K."/>
            <person name="Yuuki H."/>
            <person name="Oshima A."/>
            <person name="Sasaki N."/>
            <person name="Aotsuka S."/>
            <person name="Yoshikawa Y."/>
            <person name="Matsunawa H."/>
            <person name="Ichihara T."/>
            <person name="Shiohata N."/>
            <person name="Sano S."/>
            <person name="Moriya S."/>
            <person name="Momiyama H."/>
            <person name="Satoh N."/>
            <person name="Takami S."/>
            <person name="Terashima Y."/>
            <person name="Suzuki O."/>
            <person name="Nakagawa S."/>
            <person name="Senoh A."/>
            <person name="Mizoguchi H."/>
            <person name="Goto Y."/>
            <person name="Shimizu F."/>
            <person name="Wakebe H."/>
            <person name="Hishigaki H."/>
            <person name="Watanabe T."/>
            <person name="Sugiyama A."/>
            <person name="Takemoto M."/>
            <person name="Kawakami B."/>
            <person name="Yamazaki M."/>
            <person name="Watanabe K."/>
            <person name="Kumagai A."/>
            <person name="Itakura S."/>
            <person name="Fukuzumi Y."/>
            <person name="Fujimori Y."/>
            <person name="Komiyama M."/>
            <person name="Tashiro H."/>
            <person name="Tanigami A."/>
            <person name="Fujiwara T."/>
            <person name="Ono T."/>
            <person name="Yamada K."/>
            <person name="Fujii Y."/>
            <person name="Ozaki K."/>
            <person name="Hirao M."/>
            <person name="Ohmori Y."/>
            <person name="Kawabata A."/>
            <person name="Hikiji T."/>
            <person name="Kobatake N."/>
            <person name="Inagaki H."/>
            <person name="Ikema Y."/>
            <person name="Okamoto S."/>
            <person name="Okitani R."/>
            <person name="Kawakami T."/>
            <person name="Noguchi S."/>
            <person name="Itoh T."/>
            <person name="Shigeta K."/>
            <person name="Senba T."/>
            <person name="Matsumura K."/>
            <person name="Nakajima Y."/>
            <person name="Mizuno T."/>
            <person name="Morinaga M."/>
            <person name="Sasaki M."/>
            <person name="Togashi T."/>
            <person name="Oyama M."/>
            <person name="Hata H."/>
            <person name="Watanabe M."/>
            <person name="Komatsu T."/>
            <person name="Mizushima-Sugano J."/>
            <person name="Satoh T."/>
            <person name="Shirai Y."/>
            <person name="Takahashi Y."/>
            <person name="Nakagawa K."/>
            <person name="Okumura K."/>
            <person name="Nagase T."/>
            <person name="Nomura N."/>
            <person name="Kikuchi H."/>
            <person name="Masuho Y."/>
            <person name="Yamashita R."/>
            <person name="Nakai K."/>
            <person name="Yada T."/>
            <person name="Nakamura Y."/>
            <person name="Ohara O."/>
            <person name="Isogai T."/>
            <person name="Sugano S."/>
        </authorList>
    </citation>
    <scope>NUCLEOTIDE SEQUENCE [LARGE SCALE MRNA] (ISOFORM 1)</scope>
    <source>
        <tissue>Astrocyte</tissue>
    </source>
</reference>
<reference key="2">
    <citation type="journal article" date="2004" name="Genome Res.">
        <title>The status, quality, and expansion of the NIH full-length cDNA project: the Mammalian Gene Collection (MGC).</title>
        <authorList>
            <consortium name="The MGC Project Team"/>
        </authorList>
    </citation>
    <scope>NUCLEOTIDE SEQUENCE [LARGE SCALE MRNA] (ISOFORM 2)</scope>
    <source>
        <tissue>Skin</tissue>
    </source>
</reference>
<reference key="3">
    <citation type="journal article" date="2008" name="Proc. Natl. Acad. Sci. U.S.A.">
        <title>A quantitative atlas of mitotic phosphorylation.</title>
        <authorList>
            <person name="Dephoure N."/>
            <person name="Zhou C."/>
            <person name="Villen J."/>
            <person name="Beausoleil S.A."/>
            <person name="Bakalarski C.E."/>
            <person name="Elledge S.J."/>
            <person name="Gygi S.P."/>
        </authorList>
    </citation>
    <scope>IDENTIFICATION BY MASS SPECTROMETRY [LARGE SCALE ANALYSIS]</scope>
    <source>
        <tissue>Cervix carcinoma</tissue>
    </source>
</reference>
<reference key="4">
    <citation type="journal article" date="2012" name="FEBS Lett.">
        <title>FERM-containing protein FRMD5 is a p120-catenin interacting protein that regulates tumor progression.</title>
        <authorList>
            <person name="Wang T."/>
            <person name="Pei X."/>
            <person name="Zhan J."/>
            <person name="Hu J."/>
            <person name="Yu Y."/>
            <person name="Zhang H."/>
        </authorList>
    </citation>
    <scope>SUBCELLULAR LOCATION</scope>
    <scope>INTERACTION WITH CTNND1</scope>
    <scope>FUNCTION</scope>
</reference>
<reference key="5">
    <citation type="journal article" date="2014" name="FEBS Lett.">
        <title>FERM domain-containing protein FRMD5 regulates cell motility via binding to integrin beta5 subunit and ROCK1.</title>
        <authorList>
            <person name="Hu J."/>
            <person name="Niu M."/>
            <person name="Li X."/>
            <person name="Lu D."/>
            <person name="Cui J."/>
            <person name="Xu W."/>
            <person name="Li G."/>
            <person name="Zhan J."/>
            <person name="Zhang H."/>
        </authorList>
    </citation>
    <scope>FUNCTION</scope>
    <scope>INTERACTION WITH ITGB5 AND ROCK1</scope>
</reference>
<reference key="6">
    <citation type="journal article" date="2022" name="Am. J. Hum. Genet.">
        <title>De novo variants in FRMD5 are associated with developmental delay, intellectual disability, ataxia, and abnormalities of eye movement.</title>
        <authorList>
            <person name="Lu S."/>
            <person name="Ma M."/>
            <person name="Mao X."/>
            <person name="Bacino C.A."/>
            <person name="Jankovic J."/>
            <person name="Sutton V.R."/>
            <person name="Bartley J.A."/>
            <person name="Wang X."/>
            <person name="Rosenfeld J.A."/>
            <person name="Beleza-Meireles A."/>
            <person name="Chauhan J."/>
            <person name="Pan X."/>
            <person name="Li M."/>
            <person name="Liu P."/>
            <person name="Prescott K."/>
            <person name="Amin S."/>
            <person name="Davies G."/>
            <person name="Wangler M.F."/>
            <person name="Dai Y."/>
            <person name="Bellen H.J."/>
        </authorList>
    </citation>
    <scope>VARIANTS NEDEMA LEU-114; ARG-349; ARG-351; GLY-351; ARG-352; PRO-354 AND CYS-546</scope>
    <scope>INVOLVEMENT IN NEDEMA</scope>
</reference>